<organism>
    <name type="scientific">Leifsonia xyli subsp. xyli (strain CTCB07)</name>
    <dbReference type="NCBI Taxonomy" id="281090"/>
    <lineage>
        <taxon>Bacteria</taxon>
        <taxon>Bacillati</taxon>
        <taxon>Actinomycetota</taxon>
        <taxon>Actinomycetes</taxon>
        <taxon>Micrococcales</taxon>
        <taxon>Microbacteriaceae</taxon>
        <taxon>Leifsonia</taxon>
    </lineage>
</organism>
<proteinExistence type="inferred from homology"/>
<gene>
    <name evidence="1" type="primary">rpmJ2</name>
    <name type="ordered locus">Lxx20595</name>
</gene>
<name>RL362_LEIXX</name>
<accession>Q6ACX8</accession>
<feature type="chain" id="PRO_0000126203" description="Large ribosomal subunit protein bL36B">
    <location>
        <begin position="1"/>
        <end position="40"/>
    </location>
</feature>
<dbReference type="EMBL" id="AE016822">
    <property type="protein sequence ID" value="AAT89766.1"/>
    <property type="molecule type" value="Genomic_DNA"/>
</dbReference>
<dbReference type="RefSeq" id="WP_011186752.1">
    <property type="nucleotide sequence ID" value="NC_006087.1"/>
</dbReference>
<dbReference type="SMR" id="Q6ACX8"/>
<dbReference type="STRING" id="281090.Lxx20595"/>
<dbReference type="KEGG" id="lxx:Lxx20595"/>
<dbReference type="eggNOG" id="COG0257">
    <property type="taxonomic scope" value="Bacteria"/>
</dbReference>
<dbReference type="HOGENOM" id="CLU_135723_3_1_11"/>
<dbReference type="Proteomes" id="UP000001306">
    <property type="component" value="Chromosome"/>
</dbReference>
<dbReference type="GO" id="GO:1990904">
    <property type="term" value="C:ribonucleoprotein complex"/>
    <property type="evidence" value="ECO:0007669"/>
    <property type="project" value="UniProtKB-KW"/>
</dbReference>
<dbReference type="GO" id="GO:0005840">
    <property type="term" value="C:ribosome"/>
    <property type="evidence" value="ECO:0007669"/>
    <property type="project" value="UniProtKB-KW"/>
</dbReference>
<dbReference type="GO" id="GO:0003735">
    <property type="term" value="F:structural constituent of ribosome"/>
    <property type="evidence" value="ECO:0007669"/>
    <property type="project" value="InterPro"/>
</dbReference>
<dbReference type="GO" id="GO:0006412">
    <property type="term" value="P:translation"/>
    <property type="evidence" value="ECO:0007669"/>
    <property type="project" value="UniProtKB-UniRule"/>
</dbReference>
<dbReference type="HAMAP" id="MF_00251">
    <property type="entry name" value="Ribosomal_bL36"/>
    <property type="match status" value="1"/>
</dbReference>
<dbReference type="InterPro" id="IPR000473">
    <property type="entry name" value="Ribosomal_bL36"/>
</dbReference>
<dbReference type="InterPro" id="IPR035977">
    <property type="entry name" value="Ribosomal_bL36_sp"/>
</dbReference>
<dbReference type="InterPro" id="IPR047621">
    <property type="entry name" value="Ribosomal_L36_bact"/>
</dbReference>
<dbReference type="NCBIfam" id="NF002021">
    <property type="entry name" value="PRK00831.1"/>
    <property type="match status" value="1"/>
</dbReference>
<dbReference type="NCBIfam" id="TIGR01022">
    <property type="entry name" value="rpmJ_bact"/>
    <property type="match status" value="1"/>
</dbReference>
<dbReference type="PANTHER" id="PTHR47781">
    <property type="entry name" value="50S RIBOSOMAL PROTEIN L36 2"/>
    <property type="match status" value="1"/>
</dbReference>
<dbReference type="PANTHER" id="PTHR47781:SF1">
    <property type="entry name" value="LARGE RIBOSOMAL SUBUNIT PROTEIN BL36B"/>
    <property type="match status" value="1"/>
</dbReference>
<dbReference type="Pfam" id="PF00444">
    <property type="entry name" value="Ribosomal_L36"/>
    <property type="match status" value="1"/>
</dbReference>
<dbReference type="SUPFAM" id="SSF57840">
    <property type="entry name" value="Ribosomal protein L36"/>
    <property type="match status" value="1"/>
</dbReference>
<keyword id="KW-1185">Reference proteome</keyword>
<keyword id="KW-0687">Ribonucleoprotein</keyword>
<keyword id="KW-0689">Ribosomal protein</keyword>
<evidence type="ECO:0000255" key="1">
    <source>
        <dbReference type="HAMAP-Rule" id="MF_00251"/>
    </source>
</evidence>
<evidence type="ECO:0000305" key="2"/>
<protein>
    <recommendedName>
        <fullName evidence="1">Large ribosomal subunit protein bL36B</fullName>
    </recommendedName>
    <alternativeName>
        <fullName evidence="2">50S ribosomal protein L36 2</fullName>
    </alternativeName>
</protein>
<sequence>MKVRASIKSLKNQPGAQVVRRRGRVYVINKLNPRFEGLQG</sequence>
<comment type="similarity">
    <text evidence="1">Belongs to the bacterial ribosomal protein bL36 family.</text>
</comment>
<reference key="1">
    <citation type="journal article" date="2004" name="Mol. Plant Microbe Interact.">
        <title>The genome sequence of the Gram-positive sugarcane pathogen Leifsonia xyli subsp. xyli.</title>
        <authorList>
            <person name="Monteiro-Vitorello C.B."/>
            <person name="Camargo L.E.A."/>
            <person name="Van Sluys M.A."/>
            <person name="Kitajima J.P."/>
            <person name="Truffi D."/>
            <person name="do Amaral A.M."/>
            <person name="Harakava R."/>
            <person name="de Oliveira J.C.F."/>
            <person name="Wood D."/>
            <person name="de Oliveira M.C."/>
            <person name="Miyaki C.Y."/>
            <person name="Takita M.A."/>
            <person name="da Silva A.C.R."/>
            <person name="Furlan L.R."/>
            <person name="Carraro D.M."/>
            <person name="Camarotte G."/>
            <person name="Almeida N.F. Jr."/>
            <person name="Carrer H."/>
            <person name="Coutinho L.L."/>
            <person name="El-Dorry H.A."/>
            <person name="Ferro M.I.T."/>
            <person name="Gagliardi P.R."/>
            <person name="Giglioti E."/>
            <person name="Goldman M.H.S."/>
            <person name="Goldman G.H."/>
            <person name="Kimura E.T."/>
            <person name="Ferro E.S."/>
            <person name="Kuramae E.E."/>
            <person name="Lemos E.G.M."/>
            <person name="Lemos M.V.F."/>
            <person name="Mauro S.M.Z."/>
            <person name="Machado M.A."/>
            <person name="Marino C.L."/>
            <person name="Menck C.F."/>
            <person name="Nunes L.R."/>
            <person name="Oliveira R.C."/>
            <person name="Pereira G.G."/>
            <person name="Siqueira W."/>
            <person name="de Souza A.A."/>
            <person name="Tsai S.M."/>
            <person name="Zanca A.S."/>
            <person name="Simpson A.J.G."/>
            <person name="Brumbley S.M."/>
            <person name="Setubal J.C."/>
        </authorList>
    </citation>
    <scope>NUCLEOTIDE SEQUENCE [LARGE SCALE GENOMIC DNA]</scope>
    <source>
        <strain>CTCB07</strain>
    </source>
</reference>